<feature type="chain" id="PRO_0000272378" description="Flavin-dependent thymidylate synthase">
    <location>
        <begin position="1"/>
        <end position="294"/>
    </location>
</feature>
<feature type="domain" description="ThyX" evidence="2">
    <location>
        <begin position="27"/>
        <end position="250"/>
    </location>
</feature>
<feature type="short sequence motif" description="ThyX motif" evidence="1">
    <location>
        <begin position="96"/>
        <end position="106"/>
    </location>
</feature>
<feature type="active site" description="Involved in ionization of N3 of dUMP, leading to its activation" evidence="1">
    <location>
        <position position="216"/>
    </location>
</feature>
<feature type="binding site" evidence="1">
    <location>
        <position position="73"/>
    </location>
    <ligand>
        <name>FAD</name>
        <dbReference type="ChEBI" id="CHEBI:57692"/>
        <note>ligand shared between neighboring subunits</note>
    </ligand>
</feature>
<feature type="binding site" evidence="1">
    <location>
        <begin position="93"/>
        <end position="96"/>
    </location>
    <ligand>
        <name>dUMP</name>
        <dbReference type="ChEBI" id="CHEBI:246422"/>
        <note>ligand shared between dimeric partners</note>
    </ligand>
</feature>
<feature type="binding site" evidence="1">
    <location>
        <begin position="96"/>
        <end position="98"/>
    </location>
    <ligand>
        <name>FAD</name>
        <dbReference type="ChEBI" id="CHEBI:57692"/>
        <note>ligand shared between neighboring subunits</note>
    </ligand>
</feature>
<feature type="binding site" description="in other chain" evidence="1">
    <location>
        <begin position="104"/>
        <end position="108"/>
    </location>
    <ligand>
        <name>dUMP</name>
        <dbReference type="ChEBI" id="CHEBI:246422"/>
        <note>ligand shared between dimeric partners</note>
    </ligand>
</feature>
<feature type="binding site" evidence="1">
    <location>
        <position position="104"/>
    </location>
    <ligand>
        <name>FAD</name>
        <dbReference type="ChEBI" id="CHEBI:57692"/>
        <note>ligand shared between neighboring subunits</note>
    </ligand>
</feature>
<feature type="binding site" description="in other chain" evidence="1">
    <location>
        <position position="189"/>
    </location>
    <ligand>
        <name>dUMP</name>
        <dbReference type="ChEBI" id="CHEBI:246422"/>
        <note>ligand shared between dimeric partners</note>
    </ligand>
</feature>
<feature type="binding site" evidence="1">
    <location>
        <begin position="205"/>
        <end position="207"/>
    </location>
    <ligand>
        <name>FAD</name>
        <dbReference type="ChEBI" id="CHEBI:57692"/>
        <note>ligand shared between neighboring subunits</note>
    </ligand>
</feature>
<feature type="binding site" evidence="1">
    <location>
        <position position="211"/>
    </location>
    <ligand>
        <name>FAD</name>
        <dbReference type="ChEBI" id="CHEBI:57692"/>
        <note>ligand shared between neighboring subunits</note>
    </ligand>
</feature>
<feature type="binding site" evidence="1">
    <location>
        <position position="216"/>
    </location>
    <ligand>
        <name>dUMP</name>
        <dbReference type="ChEBI" id="CHEBI:246422"/>
        <note>ligand shared between dimeric partners</note>
    </ligand>
</feature>
<proteinExistence type="inferred from homology"/>
<sequence length="294" mass="34486">MNNATKRVVVPALEEILYEPIKVLDHGFIRVIDYMGDDSAIVQAARVSYGKGTKQLNQDKGLINYLLRHYHTTPFEMCDIKFHIKLPIFIARQWIRHRTASVNEYSARYSILGNEFYLPEPQNIAPQSSTNKQCRESDSLPKEVAEKVLNILEEDARNCYKHYTKLMNTDEEGNIIDDNNTGIARELARMNLTLNYYTEWYWKINLHNLLHFLRLRADPHAQYEIRVYAEKMLDIVKAWVPFTYEAFEEYRMCGANISRKGLEVIKKMISGEKVTHETSGMTKREWEELTKILK</sequence>
<accession>Q1RJV8</accession>
<comment type="function">
    <text evidence="1">Catalyzes the reductive methylation of 2'-deoxyuridine-5'-monophosphate (dUMP) to 2'-deoxythymidine-5'-monophosphate (dTMP) while utilizing 5,10-methylenetetrahydrofolate (mTHF) as the methyl donor, and NADPH and FADH(2) as the reductant.</text>
</comment>
<comment type="catalytic activity">
    <reaction evidence="1">
        <text>dUMP + (6R)-5,10-methylene-5,6,7,8-tetrahydrofolate + NADPH + H(+) = dTMP + (6S)-5,6,7,8-tetrahydrofolate + NADP(+)</text>
        <dbReference type="Rhea" id="RHEA:29043"/>
        <dbReference type="ChEBI" id="CHEBI:15378"/>
        <dbReference type="ChEBI" id="CHEBI:15636"/>
        <dbReference type="ChEBI" id="CHEBI:57453"/>
        <dbReference type="ChEBI" id="CHEBI:57783"/>
        <dbReference type="ChEBI" id="CHEBI:58349"/>
        <dbReference type="ChEBI" id="CHEBI:63528"/>
        <dbReference type="ChEBI" id="CHEBI:246422"/>
        <dbReference type="EC" id="2.1.1.148"/>
    </reaction>
</comment>
<comment type="cofactor">
    <cofactor evidence="1">
        <name>FAD</name>
        <dbReference type="ChEBI" id="CHEBI:57692"/>
    </cofactor>
    <text evidence="1">Binds 4 FAD per tetramer. Each FAD binding site is formed by three monomers.</text>
</comment>
<comment type="pathway">
    <text evidence="1">Pyrimidine metabolism; dTTP biosynthesis.</text>
</comment>
<comment type="subunit">
    <text evidence="1">Homotetramer.</text>
</comment>
<comment type="similarity">
    <text evidence="1">Belongs to the thymidylate synthase ThyX family.</text>
</comment>
<keyword id="KW-0274">FAD</keyword>
<keyword id="KW-0285">Flavoprotein</keyword>
<keyword id="KW-0489">Methyltransferase</keyword>
<keyword id="KW-0521">NADP</keyword>
<keyword id="KW-0545">Nucleotide biosynthesis</keyword>
<keyword id="KW-0808">Transferase</keyword>
<organism>
    <name type="scientific">Rickettsia bellii (strain RML369-C)</name>
    <dbReference type="NCBI Taxonomy" id="336407"/>
    <lineage>
        <taxon>Bacteria</taxon>
        <taxon>Pseudomonadati</taxon>
        <taxon>Pseudomonadota</taxon>
        <taxon>Alphaproteobacteria</taxon>
        <taxon>Rickettsiales</taxon>
        <taxon>Rickettsiaceae</taxon>
        <taxon>Rickettsieae</taxon>
        <taxon>Rickettsia</taxon>
        <taxon>belli group</taxon>
    </lineage>
</organism>
<reference key="1">
    <citation type="journal article" date="2006" name="PLoS Genet.">
        <title>Genome sequence of Rickettsia bellii illuminates the role of amoebae in gene exchanges between intracellular pathogens.</title>
        <authorList>
            <person name="Ogata H."/>
            <person name="La Scola B."/>
            <person name="Audic S."/>
            <person name="Renesto P."/>
            <person name="Blanc G."/>
            <person name="Robert C."/>
            <person name="Fournier P.-E."/>
            <person name="Claverie J.-M."/>
            <person name="Raoult D."/>
        </authorList>
    </citation>
    <scope>NUCLEOTIDE SEQUENCE [LARGE SCALE GENOMIC DNA]</scope>
    <source>
        <strain>RML369-C</strain>
    </source>
</reference>
<dbReference type="EC" id="2.1.1.148" evidence="1"/>
<dbReference type="EMBL" id="CP000087">
    <property type="protein sequence ID" value="ABE04356.1"/>
    <property type="molecule type" value="Genomic_DNA"/>
</dbReference>
<dbReference type="RefSeq" id="WP_011476968.1">
    <property type="nucleotide sequence ID" value="NC_007940.1"/>
</dbReference>
<dbReference type="SMR" id="Q1RJV8"/>
<dbReference type="KEGG" id="rbe:RBE_0275"/>
<dbReference type="eggNOG" id="COG1351">
    <property type="taxonomic scope" value="Bacteria"/>
</dbReference>
<dbReference type="HOGENOM" id="CLU_067790_0_0_5"/>
<dbReference type="OrthoDB" id="9774464at2"/>
<dbReference type="UniPathway" id="UPA00575"/>
<dbReference type="Proteomes" id="UP000001951">
    <property type="component" value="Chromosome"/>
</dbReference>
<dbReference type="GO" id="GO:0050660">
    <property type="term" value="F:flavin adenine dinucleotide binding"/>
    <property type="evidence" value="ECO:0007669"/>
    <property type="project" value="InterPro"/>
</dbReference>
<dbReference type="GO" id="GO:0070402">
    <property type="term" value="F:NADPH binding"/>
    <property type="evidence" value="ECO:0007669"/>
    <property type="project" value="TreeGrafter"/>
</dbReference>
<dbReference type="GO" id="GO:0050797">
    <property type="term" value="F:thymidylate synthase (FAD) activity"/>
    <property type="evidence" value="ECO:0007669"/>
    <property type="project" value="UniProtKB-UniRule"/>
</dbReference>
<dbReference type="GO" id="GO:0004799">
    <property type="term" value="F:thymidylate synthase activity"/>
    <property type="evidence" value="ECO:0007669"/>
    <property type="project" value="TreeGrafter"/>
</dbReference>
<dbReference type="GO" id="GO:0006231">
    <property type="term" value="P:dTMP biosynthetic process"/>
    <property type="evidence" value="ECO:0007669"/>
    <property type="project" value="UniProtKB-UniRule"/>
</dbReference>
<dbReference type="GO" id="GO:0006235">
    <property type="term" value="P:dTTP biosynthetic process"/>
    <property type="evidence" value="ECO:0007669"/>
    <property type="project" value="UniProtKB-UniRule"/>
</dbReference>
<dbReference type="GO" id="GO:0032259">
    <property type="term" value="P:methylation"/>
    <property type="evidence" value="ECO:0007669"/>
    <property type="project" value="UniProtKB-KW"/>
</dbReference>
<dbReference type="CDD" id="cd20175">
    <property type="entry name" value="ThyX"/>
    <property type="match status" value="1"/>
</dbReference>
<dbReference type="Gene3D" id="3.30.1360.170">
    <property type="match status" value="1"/>
</dbReference>
<dbReference type="HAMAP" id="MF_01408">
    <property type="entry name" value="ThyX"/>
    <property type="match status" value="1"/>
</dbReference>
<dbReference type="InterPro" id="IPR003669">
    <property type="entry name" value="Thymidylate_synthase_ThyX"/>
</dbReference>
<dbReference type="InterPro" id="IPR036098">
    <property type="entry name" value="Thymidylate_synthase_ThyX_sf"/>
</dbReference>
<dbReference type="NCBIfam" id="TIGR02170">
    <property type="entry name" value="thyX"/>
    <property type="match status" value="1"/>
</dbReference>
<dbReference type="PANTHER" id="PTHR34934">
    <property type="entry name" value="FLAVIN-DEPENDENT THYMIDYLATE SYNTHASE"/>
    <property type="match status" value="1"/>
</dbReference>
<dbReference type="PANTHER" id="PTHR34934:SF1">
    <property type="entry name" value="FLAVIN-DEPENDENT THYMIDYLATE SYNTHASE"/>
    <property type="match status" value="1"/>
</dbReference>
<dbReference type="Pfam" id="PF02511">
    <property type="entry name" value="Thy1"/>
    <property type="match status" value="1"/>
</dbReference>
<dbReference type="SUPFAM" id="SSF69796">
    <property type="entry name" value="Thymidylate synthase-complementing protein Thy1"/>
    <property type="match status" value="1"/>
</dbReference>
<dbReference type="PROSITE" id="PS51331">
    <property type="entry name" value="THYX"/>
    <property type="match status" value="1"/>
</dbReference>
<evidence type="ECO:0000255" key="1">
    <source>
        <dbReference type="HAMAP-Rule" id="MF_01408"/>
    </source>
</evidence>
<evidence type="ECO:0000255" key="2">
    <source>
        <dbReference type="PROSITE-ProRule" id="PRU00661"/>
    </source>
</evidence>
<gene>
    <name evidence="1" type="primary">thyX</name>
    <name type="ordered locus">RBE_0275</name>
</gene>
<protein>
    <recommendedName>
        <fullName evidence="1">Flavin-dependent thymidylate synthase</fullName>
        <shortName evidence="1">FDTS</shortName>
        <ecNumber evidence="1">2.1.1.148</ecNumber>
    </recommendedName>
    <alternativeName>
        <fullName evidence="1">FAD-dependent thymidylate synthase</fullName>
    </alternativeName>
    <alternativeName>
        <fullName evidence="1">Thymidylate synthase ThyX</fullName>
        <shortName evidence="1">TS</shortName>
        <shortName evidence="1">TSase</shortName>
    </alternativeName>
</protein>
<name>THYX_RICBR</name>